<accession>Q7YJV4</accession>
<keyword id="KW-0150">Chloroplast</keyword>
<keyword id="KW-0934">Plastid</keyword>
<keyword id="KW-0687">Ribonucleoprotein</keyword>
<keyword id="KW-0689">Ribosomal protein</keyword>
<keyword id="KW-0694">RNA-binding</keyword>
<keyword id="KW-0699">rRNA-binding</keyword>
<evidence type="ECO:0000255" key="1">
    <source>
        <dbReference type="HAMAP-Rule" id="MF_00270"/>
    </source>
</evidence>
<evidence type="ECO:0000256" key="2">
    <source>
        <dbReference type="SAM" id="MobiDB-lite"/>
    </source>
</evidence>
<evidence type="ECO:0000305" key="3"/>
<proteinExistence type="inferred from homology"/>
<geneLocation type="chloroplast"/>
<protein>
    <recommendedName>
        <fullName evidence="1">Small ribosomal subunit protein bS18c</fullName>
    </recommendedName>
    <alternativeName>
        <fullName evidence="3">30S ribosomal protein S18, chloroplastic</fullName>
    </alternativeName>
</protein>
<reference key="1">
    <citation type="journal article" date="2003" name="Plant Syst. Evol.">
        <title>The chloroplast genome of the 'basal' angiosperm Calycanthus fertilis -- structural and phylogenetic analyses.</title>
        <authorList>
            <person name="Goremykin V."/>
            <person name="Hirsch-Ernst K.I."/>
            <person name="Woelfl S."/>
            <person name="Hellwig F.H."/>
        </authorList>
    </citation>
    <scope>NUCLEOTIDE SEQUENCE [LARGE SCALE GENOMIC DNA]</scope>
</reference>
<organism>
    <name type="scientific">Calycanthus floridus var. glaucus</name>
    <name type="common">Eastern sweetshrub</name>
    <name type="synonym">Calycanthus fertilis var. ferax</name>
    <dbReference type="NCBI Taxonomy" id="212734"/>
    <lineage>
        <taxon>Eukaryota</taxon>
        <taxon>Viridiplantae</taxon>
        <taxon>Streptophyta</taxon>
        <taxon>Embryophyta</taxon>
        <taxon>Tracheophyta</taxon>
        <taxon>Spermatophyta</taxon>
        <taxon>Magnoliopsida</taxon>
        <taxon>Magnoliidae</taxon>
        <taxon>Laurales</taxon>
        <taxon>Calycanthaceae</taxon>
        <taxon>Calycanthus</taxon>
    </lineage>
</organism>
<gene>
    <name evidence="1" type="primary">rps18</name>
</gene>
<dbReference type="EMBL" id="AJ428413">
    <property type="protein sequence ID" value="CAD28743.1"/>
    <property type="molecule type" value="Genomic_DNA"/>
</dbReference>
<dbReference type="RefSeq" id="NP_862776.1">
    <property type="nucleotide sequence ID" value="NC_004993.1"/>
</dbReference>
<dbReference type="SMR" id="Q7YJV4"/>
<dbReference type="GeneID" id="2598041"/>
<dbReference type="GO" id="GO:0009507">
    <property type="term" value="C:chloroplast"/>
    <property type="evidence" value="ECO:0007669"/>
    <property type="project" value="UniProtKB-SubCell"/>
</dbReference>
<dbReference type="GO" id="GO:0005763">
    <property type="term" value="C:mitochondrial small ribosomal subunit"/>
    <property type="evidence" value="ECO:0007669"/>
    <property type="project" value="TreeGrafter"/>
</dbReference>
<dbReference type="GO" id="GO:0070181">
    <property type="term" value="F:small ribosomal subunit rRNA binding"/>
    <property type="evidence" value="ECO:0007669"/>
    <property type="project" value="TreeGrafter"/>
</dbReference>
<dbReference type="GO" id="GO:0003735">
    <property type="term" value="F:structural constituent of ribosome"/>
    <property type="evidence" value="ECO:0007669"/>
    <property type="project" value="InterPro"/>
</dbReference>
<dbReference type="GO" id="GO:0006412">
    <property type="term" value="P:translation"/>
    <property type="evidence" value="ECO:0007669"/>
    <property type="project" value="UniProtKB-UniRule"/>
</dbReference>
<dbReference type="FunFam" id="4.10.640.10:FF:000002">
    <property type="entry name" value="30S ribosomal protein S18, chloroplastic"/>
    <property type="match status" value="1"/>
</dbReference>
<dbReference type="Gene3D" id="4.10.640.10">
    <property type="entry name" value="Ribosomal protein S18"/>
    <property type="match status" value="1"/>
</dbReference>
<dbReference type="HAMAP" id="MF_00270">
    <property type="entry name" value="Ribosomal_bS18"/>
    <property type="match status" value="1"/>
</dbReference>
<dbReference type="InterPro" id="IPR001648">
    <property type="entry name" value="Ribosomal_bS18"/>
</dbReference>
<dbReference type="InterPro" id="IPR018275">
    <property type="entry name" value="Ribosomal_bS18_CS"/>
</dbReference>
<dbReference type="InterPro" id="IPR036870">
    <property type="entry name" value="Ribosomal_bS18_sf"/>
</dbReference>
<dbReference type="NCBIfam" id="TIGR00165">
    <property type="entry name" value="S18"/>
    <property type="match status" value="1"/>
</dbReference>
<dbReference type="PANTHER" id="PTHR13479">
    <property type="entry name" value="30S RIBOSOMAL PROTEIN S18"/>
    <property type="match status" value="1"/>
</dbReference>
<dbReference type="PANTHER" id="PTHR13479:SF40">
    <property type="entry name" value="SMALL RIBOSOMAL SUBUNIT PROTEIN BS18M"/>
    <property type="match status" value="1"/>
</dbReference>
<dbReference type="Pfam" id="PF01084">
    <property type="entry name" value="Ribosomal_S18"/>
    <property type="match status" value="1"/>
</dbReference>
<dbReference type="PRINTS" id="PR00974">
    <property type="entry name" value="RIBOSOMALS18"/>
</dbReference>
<dbReference type="SUPFAM" id="SSF46911">
    <property type="entry name" value="Ribosomal protein S18"/>
    <property type="match status" value="1"/>
</dbReference>
<dbReference type="PROSITE" id="PS00057">
    <property type="entry name" value="RIBOSOMAL_S18"/>
    <property type="match status" value="1"/>
</dbReference>
<comment type="subunit">
    <text>Part of the 30S ribosomal subunit.</text>
</comment>
<comment type="subcellular location">
    <subcellularLocation>
        <location>Plastid</location>
        <location>Chloroplast</location>
    </subcellularLocation>
</comment>
<comment type="similarity">
    <text evidence="1">Belongs to the bacterial ribosomal protein bS18 family.</text>
</comment>
<sequence>MDKSKRPFRKSKRSFRRRLPPIGSGDRIDYRNMSLISQFISEQGKILSRRVNRLTLKQQRLITIAIKQARILSSLPFLNNEKQFERTESIPRTTGPRTRK</sequence>
<feature type="chain" id="PRO_0000111278" description="Small ribosomal subunit protein bS18c">
    <location>
        <begin position="1"/>
        <end position="100"/>
    </location>
</feature>
<feature type="region of interest" description="Disordered" evidence="2">
    <location>
        <begin position="1"/>
        <end position="23"/>
    </location>
</feature>
<feature type="compositionally biased region" description="Basic residues" evidence="2">
    <location>
        <begin position="1"/>
        <end position="19"/>
    </location>
</feature>
<name>RR18_CALFG</name>